<sequence>MLQFPQFDPVALRLGPLAIHWYGLMYLLAFAFVYLLGRYRIKRGQGGNLTYKDLEDLIFYSVLGVVLGGRLGYVLFYKPGYYLSHPLEIAFLWEGGMSFHGGLIGVILVMLLFARKKGVSFFTISDFIAPLIPLGLGAGRLGNFINGELWGRPSDLPWAMVFPQSGSMLPRHPSQLYELGLEGLVLFALLWWFSSKPRPSGQVSAMFLMGYGAFRFLVEFTREPDNFLGLLAGGMSMGQWLSLPMFLGGLVLFVLTARRSSRQP</sequence>
<proteinExistence type="inferred from homology"/>
<organism>
    <name type="scientific">Bordetella avium (strain 197N)</name>
    <dbReference type="NCBI Taxonomy" id="360910"/>
    <lineage>
        <taxon>Bacteria</taxon>
        <taxon>Pseudomonadati</taxon>
        <taxon>Pseudomonadota</taxon>
        <taxon>Betaproteobacteria</taxon>
        <taxon>Burkholderiales</taxon>
        <taxon>Alcaligenaceae</taxon>
        <taxon>Bordetella</taxon>
    </lineage>
</organism>
<comment type="function">
    <text evidence="1">Catalyzes the transfer of the diacylglyceryl group from phosphatidylglycerol to the sulfhydryl group of the N-terminal cysteine of a prolipoprotein, the first step in the formation of mature lipoproteins.</text>
</comment>
<comment type="catalytic activity">
    <reaction evidence="1">
        <text>L-cysteinyl-[prolipoprotein] + a 1,2-diacyl-sn-glycero-3-phospho-(1'-sn-glycerol) = an S-1,2-diacyl-sn-glyceryl-L-cysteinyl-[prolipoprotein] + sn-glycerol 1-phosphate + H(+)</text>
        <dbReference type="Rhea" id="RHEA:56712"/>
        <dbReference type="Rhea" id="RHEA-COMP:14679"/>
        <dbReference type="Rhea" id="RHEA-COMP:14680"/>
        <dbReference type="ChEBI" id="CHEBI:15378"/>
        <dbReference type="ChEBI" id="CHEBI:29950"/>
        <dbReference type="ChEBI" id="CHEBI:57685"/>
        <dbReference type="ChEBI" id="CHEBI:64716"/>
        <dbReference type="ChEBI" id="CHEBI:140658"/>
        <dbReference type="EC" id="2.5.1.145"/>
    </reaction>
</comment>
<comment type="pathway">
    <text evidence="1">Protein modification; lipoprotein biosynthesis (diacylglyceryl transfer).</text>
</comment>
<comment type="subcellular location">
    <subcellularLocation>
        <location evidence="1">Cell inner membrane</location>
        <topology evidence="1">Multi-pass membrane protein</topology>
    </subcellularLocation>
</comment>
<comment type="similarity">
    <text evidence="1">Belongs to the Lgt family.</text>
</comment>
<name>LGT_BORA1</name>
<accession>Q2KVC1</accession>
<feature type="chain" id="PRO_1000053391" description="Phosphatidylglycerol--prolipoprotein diacylglyceryl transferase">
    <location>
        <begin position="1"/>
        <end position="264"/>
    </location>
</feature>
<feature type="transmembrane region" description="Helical" evidence="1">
    <location>
        <begin position="17"/>
        <end position="37"/>
    </location>
</feature>
<feature type="transmembrane region" description="Helical" evidence="1">
    <location>
        <begin position="57"/>
        <end position="77"/>
    </location>
</feature>
<feature type="transmembrane region" description="Helical" evidence="1">
    <location>
        <begin position="89"/>
        <end position="109"/>
    </location>
</feature>
<feature type="transmembrane region" description="Helical" evidence="1">
    <location>
        <begin position="118"/>
        <end position="138"/>
    </location>
</feature>
<feature type="transmembrane region" description="Helical" evidence="1">
    <location>
        <begin position="173"/>
        <end position="193"/>
    </location>
</feature>
<feature type="transmembrane region" description="Helical" evidence="1">
    <location>
        <begin position="201"/>
        <end position="221"/>
    </location>
</feature>
<feature type="transmembrane region" description="Helical" evidence="1">
    <location>
        <begin position="237"/>
        <end position="257"/>
    </location>
</feature>
<feature type="binding site" evidence="1">
    <location>
        <position position="140"/>
    </location>
    <ligand>
        <name>a 1,2-diacyl-sn-glycero-3-phospho-(1'-sn-glycerol)</name>
        <dbReference type="ChEBI" id="CHEBI:64716"/>
    </ligand>
</feature>
<dbReference type="EC" id="2.5.1.145" evidence="1"/>
<dbReference type="EMBL" id="AM167904">
    <property type="protein sequence ID" value="CAJ50507.1"/>
    <property type="molecule type" value="Genomic_DNA"/>
</dbReference>
<dbReference type="RefSeq" id="WP_012418537.1">
    <property type="nucleotide sequence ID" value="NC_010645.1"/>
</dbReference>
<dbReference type="SMR" id="Q2KVC1"/>
<dbReference type="STRING" id="360910.BAV2897"/>
<dbReference type="KEGG" id="bav:BAV2897"/>
<dbReference type="eggNOG" id="COG0682">
    <property type="taxonomic scope" value="Bacteria"/>
</dbReference>
<dbReference type="HOGENOM" id="CLU_013386_1_0_4"/>
<dbReference type="OrthoDB" id="871140at2"/>
<dbReference type="UniPathway" id="UPA00664"/>
<dbReference type="Proteomes" id="UP000001977">
    <property type="component" value="Chromosome"/>
</dbReference>
<dbReference type="GO" id="GO:0005886">
    <property type="term" value="C:plasma membrane"/>
    <property type="evidence" value="ECO:0007669"/>
    <property type="project" value="UniProtKB-SubCell"/>
</dbReference>
<dbReference type="GO" id="GO:0008961">
    <property type="term" value="F:phosphatidylglycerol-prolipoprotein diacylglyceryl transferase activity"/>
    <property type="evidence" value="ECO:0007669"/>
    <property type="project" value="UniProtKB-UniRule"/>
</dbReference>
<dbReference type="GO" id="GO:0042158">
    <property type="term" value="P:lipoprotein biosynthetic process"/>
    <property type="evidence" value="ECO:0007669"/>
    <property type="project" value="UniProtKB-UniRule"/>
</dbReference>
<dbReference type="HAMAP" id="MF_01147">
    <property type="entry name" value="Lgt"/>
    <property type="match status" value="1"/>
</dbReference>
<dbReference type="InterPro" id="IPR001640">
    <property type="entry name" value="Lgt"/>
</dbReference>
<dbReference type="NCBIfam" id="TIGR00544">
    <property type="entry name" value="lgt"/>
    <property type="match status" value="1"/>
</dbReference>
<dbReference type="PANTHER" id="PTHR30589:SF0">
    <property type="entry name" value="PHOSPHATIDYLGLYCEROL--PROLIPOPROTEIN DIACYLGLYCERYL TRANSFERASE"/>
    <property type="match status" value="1"/>
</dbReference>
<dbReference type="PANTHER" id="PTHR30589">
    <property type="entry name" value="PROLIPOPROTEIN DIACYLGLYCERYL TRANSFERASE"/>
    <property type="match status" value="1"/>
</dbReference>
<dbReference type="Pfam" id="PF01790">
    <property type="entry name" value="LGT"/>
    <property type="match status" value="1"/>
</dbReference>
<dbReference type="PROSITE" id="PS01311">
    <property type="entry name" value="LGT"/>
    <property type="match status" value="1"/>
</dbReference>
<keyword id="KW-0997">Cell inner membrane</keyword>
<keyword id="KW-1003">Cell membrane</keyword>
<keyword id="KW-0472">Membrane</keyword>
<keyword id="KW-1185">Reference proteome</keyword>
<keyword id="KW-0808">Transferase</keyword>
<keyword id="KW-0812">Transmembrane</keyword>
<keyword id="KW-1133">Transmembrane helix</keyword>
<reference key="1">
    <citation type="journal article" date="2006" name="J. Bacteriol.">
        <title>Comparison of the genome sequence of the poultry pathogen Bordetella avium with those of B. bronchiseptica, B. pertussis, and B. parapertussis reveals extensive diversity in surface structures associated with host interaction.</title>
        <authorList>
            <person name="Sebaihia M."/>
            <person name="Preston A."/>
            <person name="Maskell D.J."/>
            <person name="Kuzmiak H."/>
            <person name="Connell T.D."/>
            <person name="King N.D."/>
            <person name="Orndorff P.E."/>
            <person name="Miyamoto D.M."/>
            <person name="Thomson N.R."/>
            <person name="Harris D."/>
            <person name="Goble A."/>
            <person name="Lord A."/>
            <person name="Murphy L."/>
            <person name="Quail M.A."/>
            <person name="Rutter S."/>
            <person name="Squares R."/>
            <person name="Squares S."/>
            <person name="Woodward J."/>
            <person name="Parkhill J."/>
            <person name="Temple L.M."/>
        </authorList>
    </citation>
    <scope>NUCLEOTIDE SEQUENCE [LARGE SCALE GENOMIC DNA]</scope>
    <source>
        <strain>197N</strain>
    </source>
</reference>
<protein>
    <recommendedName>
        <fullName evidence="1">Phosphatidylglycerol--prolipoprotein diacylglyceryl transferase</fullName>
        <ecNumber evidence="1">2.5.1.145</ecNumber>
    </recommendedName>
</protein>
<gene>
    <name evidence="1" type="primary">lgt</name>
    <name type="ordered locus">BAV2897</name>
</gene>
<evidence type="ECO:0000255" key="1">
    <source>
        <dbReference type="HAMAP-Rule" id="MF_01147"/>
    </source>
</evidence>